<dbReference type="EC" id="3.1.13.4" evidence="1"/>
<dbReference type="EMBL" id="AE016819">
    <property type="protein sequence ID" value="AAS53317.2"/>
    <property type="molecule type" value="Genomic_DNA"/>
</dbReference>
<dbReference type="RefSeq" id="NP_985493.2">
    <property type="nucleotide sequence ID" value="NM_210847.2"/>
</dbReference>
<dbReference type="SMR" id="Q754X1"/>
<dbReference type="FunCoup" id="Q754X1">
    <property type="interactions" value="733"/>
</dbReference>
<dbReference type="STRING" id="284811.Q754X1"/>
<dbReference type="MEROPS" id="C19.978"/>
<dbReference type="EnsemblFungi" id="AAS53317">
    <property type="protein sequence ID" value="AAS53317"/>
    <property type="gene ID" value="AGOS_AFL055W"/>
</dbReference>
<dbReference type="GeneID" id="4621724"/>
<dbReference type="KEGG" id="ago:AGOS_AFL055W"/>
<dbReference type="eggNOG" id="KOG1275">
    <property type="taxonomic scope" value="Eukaryota"/>
</dbReference>
<dbReference type="HOGENOM" id="CLU_002369_1_0_1"/>
<dbReference type="InParanoid" id="Q754X1"/>
<dbReference type="OMA" id="TQELLWT"/>
<dbReference type="OrthoDB" id="16516at2759"/>
<dbReference type="Proteomes" id="UP000000591">
    <property type="component" value="Chromosome VI"/>
</dbReference>
<dbReference type="GO" id="GO:0000932">
    <property type="term" value="C:P-body"/>
    <property type="evidence" value="ECO:0000318"/>
    <property type="project" value="GO_Central"/>
</dbReference>
<dbReference type="GO" id="GO:0031251">
    <property type="term" value="C:PAN complex"/>
    <property type="evidence" value="ECO:0000318"/>
    <property type="project" value="GO_Central"/>
</dbReference>
<dbReference type="GO" id="GO:0046872">
    <property type="term" value="F:metal ion binding"/>
    <property type="evidence" value="ECO:0007669"/>
    <property type="project" value="UniProtKB-KW"/>
</dbReference>
<dbReference type="GO" id="GO:0003676">
    <property type="term" value="F:nucleic acid binding"/>
    <property type="evidence" value="ECO:0007669"/>
    <property type="project" value="InterPro"/>
</dbReference>
<dbReference type="GO" id="GO:0004535">
    <property type="term" value="F:poly(A)-specific ribonuclease activity"/>
    <property type="evidence" value="ECO:0007669"/>
    <property type="project" value="UniProtKB-UniRule"/>
</dbReference>
<dbReference type="GO" id="GO:0006397">
    <property type="term" value="P:mRNA processing"/>
    <property type="evidence" value="ECO:0007669"/>
    <property type="project" value="UniProtKB-KW"/>
</dbReference>
<dbReference type="GO" id="GO:0000289">
    <property type="term" value="P:nuclear-transcribed mRNA poly(A) tail shortening"/>
    <property type="evidence" value="ECO:0000318"/>
    <property type="project" value="GO_Central"/>
</dbReference>
<dbReference type="GO" id="GO:0006301">
    <property type="term" value="P:postreplication repair"/>
    <property type="evidence" value="ECO:0007669"/>
    <property type="project" value="EnsemblFungi"/>
</dbReference>
<dbReference type="CDD" id="cd06143">
    <property type="entry name" value="PAN2_exo"/>
    <property type="match status" value="1"/>
</dbReference>
<dbReference type="FunFam" id="3.30.420.10:FF:000028">
    <property type="entry name" value="PAN2-PAN3 deadenylation complex catalytic subunit PAN2"/>
    <property type="match status" value="1"/>
</dbReference>
<dbReference type="Gene3D" id="3.90.70.10">
    <property type="entry name" value="Cysteine proteinases"/>
    <property type="match status" value="1"/>
</dbReference>
<dbReference type="Gene3D" id="3.30.420.10">
    <property type="entry name" value="Ribonuclease H-like superfamily/Ribonuclease H"/>
    <property type="match status" value="1"/>
</dbReference>
<dbReference type="Gene3D" id="2.130.10.10">
    <property type="entry name" value="YVTN repeat-like/Quinoprotein amine dehydrogenase"/>
    <property type="match status" value="1"/>
</dbReference>
<dbReference type="HAMAP" id="MF_03182">
    <property type="entry name" value="PAN2"/>
    <property type="match status" value="1"/>
</dbReference>
<dbReference type="InterPro" id="IPR013520">
    <property type="entry name" value="Exonuclease_RNaseT/DNA_pol3"/>
</dbReference>
<dbReference type="InterPro" id="IPR030843">
    <property type="entry name" value="PAN2"/>
</dbReference>
<dbReference type="InterPro" id="IPR050785">
    <property type="entry name" value="PAN2-PAN3_catalytic_subunit"/>
</dbReference>
<dbReference type="InterPro" id="IPR048841">
    <property type="entry name" value="PAN2_N"/>
</dbReference>
<dbReference type="InterPro" id="IPR028881">
    <property type="entry name" value="PAN2_UCH_dom"/>
</dbReference>
<dbReference type="InterPro" id="IPR038765">
    <property type="entry name" value="Papain-like_cys_pep_sf"/>
</dbReference>
<dbReference type="InterPro" id="IPR012337">
    <property type="entry name" value="RNaseH-like_sf"/>
</dbReference>
<dbReference type="InterPro" id="IPR036397">
    <property type="entry name" value="RNaseH_sf"/>
</dbReference>
<dbReference type="InterPro" id="IPR028889">
    <property type="entry name" value="USP_dom"/>
</dbReference>
<dbReference type="InterPro" id="IPR015943">
    <property type="entry name" value="WD40/YVTN_repeat-like_dom_sf"/>
</dbReference>
<dbReference type="InterPro" id="IPR036322">
    <property type="entry name" value="WD40_repeat_dom_sf"/>
</dbReference>
<dbReference type="InterPro" id="IPR001680">
    <property type="entry name" value="WD40_rpt"/>
</dbReference>
<dbReference type="PANTHER" id="PTHR15728">
    <property type="entry name" value="DEADENYLATION COMPLEX CATALYTIC SUBUNIT PAN2"/>
    <property type="match status" value="1"/>
</dbReference>
<dbReference type="PANTHER" id="PTHR15728:SF0">
    <property type="entry name" value="PAN2-PAN3 DEADENYLATION COMPLEX CATALYTIC SUBUNIT PAN2"/>
    <property type="match status" value="1"/>
</dbReference>
<dbReference type="Pfam" id="PF20770">
    <property type="entry name" value="PAN2_N"/>
    <property type="match status" value="1"/>
</dbReference>
<dbReference type="Pfam" id="PF00929">
    <property type="entry name" value="RNase_T"/>
    <property type="match status" value="1"/>
</dbReference>
<dbReference type="Pfam" id="PF13423">
    <property type="entry name" value="UCH_1"/>
    <property type="match status" value="1"/>
</dbReference>
<dbReference type="SMART" id="SM00479">
    <property type="entry name" value="EXOIII"/>
    <property type="match status" value="1"/>
</dbReference>
<dbReference type="SMART" id="SM00320">
    <property type="entry name" value="WD40"/>
    <property type="match status" value="3"/>
</dbReference>
<dbReference type="SUPFAM" id="SSF54001">
    <property type="entry name" value="Cysteine proteinases"/>
    <property type="match status" value="1"/>
</dbReference>
<dbReference type="SUPFAM" id="SSF53098">
    <property type="entry name" value="Ribonuclease H-like"/>
    <property type="match status" value="1"/>
</dbReference>
<dbReference type="SUPFAM" id="SSF50978">
    <property type="entry name" value="WD40 repeat-like"/>
    <property type="match status" value="1"/>
</dbReference>
<dbReference type="PROSITE" id="PS50235">
    <property type="entry name" value="USP_3"/>
    <property type="match status" value="1"/>
</dbReference>
<protein>
    <recommendedName>
        <fullName evidence="1">PAN2-PAN3 deadenylation complex catalytic subunit PAN2</fullName>
        <ecNumber evidence="1">3.1.13.4</ecNumber>
    </recommendedName>
    <alternativeName>
        <fullName evidence="1">PAB1P-dependent poly(A)-specific ribonuclease</fullName>
    </alternativeName>
    <alternativeName>
        <fullName evidence="1">Poly(A)-nuclease deadenylation complex subunit 2</fullName>
        <shortName evidence="1">PAN deadenylation complex subunit 2</shortName>
    </alternativeName>
</protein>
<comment type="function">
    <text evidence="1">Catalytic subunit of the poly(A)-nuclease (PAN) deadenylation complex, one of two cytoplasmic mRNA deadenylases involved in mRNA turnover. PAN specifically shortens poly(A) tails of RNA and the activity is stimulated by poly(A)-binding protein PAB1. PAN deadenylation is followed by rapid degradation of the shortened mRNA tails by the CCR4-NOT complex. Deadenylated mRNAs are then degraded by two alternative mechanisms, namely exosome-mediated 3'-5' exonucleolytic degradation, or deadenylation-dependent mRNA decaping and subsequent 5'-3' exonucleolytic degradation by XRN1. May also be involved in post-transcriptional maturation of mRNA poly(A) tails.</text>
</comment>
<comment type="catalytic activity">
    <reaction evidence="1">
        <text>Exonucleolytic cleavage of poly(A) to 5'-AMP.</text>
        <dbReference type="EC" id="3.1.13.4"/>
    </reaction>
</comment>
<comment type="cofactor">
    <cofactor evidence="1">
        <name>a divalent metal cation</name>
        <dbReference type="ChEBI" id="CHEBI:60240"/>
    </cofactor>
    <text evidence="1">Binds 2 metal cations per subunit in the catalytic exonuclease domain.</text>
</comment>
<comment type="activity regulation">
    <text evidence="1">Positively regulated by the regulatory subunit PAN3.</text>
</comment>
<comment type="subunit">
    <text evidence="1">Forms a heterotrimer with an asymmetric homodimer of the regulatory subunit PAN3 to form the poly(A)-nuclease (PAN) deadenylation complex.</text>
</comment>
<comment type="subcellular location">
    <subcellularLocation>
        <location evidence="1">Cytoplasm</location>
    </subcellularLocation>
</comment>
<comment type="domain">
    <text evidence="1">Contains a pseudo-UCH domain. This ubiquitin C-terminal hydrolase (UCH)-like or ubiquitin specific protease (USP)-like domain is predicted to be catalytically inactive because it lacks the active site catalytic triad characteristic of thiol proteases, with residues at the equivalent structural positions that are incompatible with catalysis, and it cannot bind ubiquitin. It functions as a structural scaffold for intra- and intermolecular interactions in the complex.</text>
</comment>
<comment type="domain">
    <text evidence="1">The linker, or PAN3 interaction domain (PID), between the WD40 repeats and the pseudo-UCH domain mediates interaction with PAN3.</text>
</comment>
<comment type="similarity">
    <text evidence="1">Belongs to the peptidase C19 family. PAN2 subfamily.</text>
</comment>
<feature type="chain" id="PRO_0000295334" description="PAN2-PAN3 deadenylation complex catalytic subunit PAN2">
    <location>
        <begin position="1"/>
        <end position="1162"/>
    </location>
</feature>
<feature type="repeat" description="WD 1" evidence="1">
    <location>
        <begin position="27"/>
        <end position="66"/>
    </location>
</feature>
<feature type="repeat" description="WD 2" evidence="1">
    <location>
        <begin position="153"/>
        <end position="193"/>
    </location>
</feature>
<feature type="repeat" description="WD 3" evidence="1">
    <location>
        <begin position="196"/>
        <end position="233"/>
    </location>
</feature>
<feature type="repeat" description="WD 4" evidence="1">
    <location>
        <begin position="300"/>
        <end position="339"/>
    </location>
</feature>
<feature type="domain" description="USP" evidence="1">
    <location>
        <begin position="492"/>
        <end position="904"/>
    </location>
</feature>
<feature type="domain" description="Exonuclease" evidence="1">
    <location>
        <begin position="956"/>
        <end position="1126"/>
    </location>
</feature>
<feature type="region of interest" description="Linker" evidence="1">
    <location>
        <begin position="341"/>
        <end position="491"/>
    </location>
</feature>
<feature type="region of interest" description="Disordered" evidence="2">
    <location>
        <begin position="401"/>
        <end position="443"/>
    </location>
</feature>
<feature type="compositionally biased region" description="Low complexity" evidence="2">
    <location>
        <begin position="407"/>
        <end position="423"/>
    </location>
</feature>
<feature type="compositionally biased region" description="Polar residues" evidence="2">
    <location>
        <begin position="424"/>
        <end position="437"/>
    </location>
</feature>
<feature type="binding site" evidence="1">
    <location>
        <position position="959"/>
    </location>
    <ligand>
        <name>a divalent metal cation</name>
        <dbReference type="ChEBI" id="CHEBI:60240"/>
        <note>catalytic</note>
    </ligand>
</feature>
<feature type="binding site" evidence="1">
    <location>
        <position position="961"/>
    </location>
    <ligand>
        <name>a divalent metal cation</name>
        <dbReference type="ChEBI" id="CHEBI:60240"/>
        <note>catalytic</note>
    </ligand>
</feature>
<feature type="binding site" evidence="1">
    <location>
        <position position="1068"/>
    </location>
    <ligand>
        <name>a divalent metal cation</name>
        <dbReference type="ChEBI" id="CHEBI:60240"/>
        <note>catalytic</note>
    </ligand>
</feature>
<feature type="binding site" evidence="1">
    <location>
        <position position="1119"/>
    </location>
    <ligand>
        <name>a divalent metal cation</name>
        <dbReference type="ChEBI" id="CHEBI:60240"/>
        <note>catalytic</note>
    </ligand>
</feature>
<keyword id="KW-0963">Cytoplasm</keyword>
<keyword id="KW-0269">Exonuclease</keyword>
<keyword id="KW-0378">Hydrolase</keyword>
<keyword id="KW-0479">Metal-binding</keyword>
<keyword id="KW-0507">mRNA processing</keyword>
<keyword id="KW-0540">Nuclease</keyword>
<keyword id="KW-1185">Reference proteome</keyword>
<keyword id="KW-0677">Repeat</keyword>
<keyword id="KW-0853">WD repeat</keyword>
<evidence type="ECO:0000255" key="1">
    <source>
        <dbReference type="HAMAP-Rule" id="MF_03182"/>
    </source>
</evidence>
<evidence type="ECO:0000256" key="2">
    <source>
        <dbReference type="SAM" id="MobiDB-lite"/>
    </source>
</evidence>
<sequence length="1162" mass="131100">MNQWQLSYQSPVELTEHLRKSYWAYDAKEKSATKMAFDQDVNLIWVGDTYGRVSSYDPSYSLYTRHTAHIGAEPVVELLSHKQGVLSLGGESLNFANRRSVTKLHVTSADIAQLCDMRAMCYGSNSQNTVYCGGTNLASGLVAVDLVKGRLSNTVQYSSKVKLMQSSNRLMAVARQNGMLDLLDPNSNTVVKTFSGHSCMVSSMDFRDHTLVTAGKSKRFNMMYPDQFVNVYDLRIMKQLPPISFSKNTEYMGNGACYMVGADFVQLHPILPTVVVIGSVTGAFDFVDLSNPTVRTQYCHPCQSVTQLQLSPSGDYIAFIEHDNNINMWSRSNGMTGFTSTATTILEYPDYPDDGILAGATSIDDYSYPLSSVGLPYYNEKLLSAWHQTVFRSDGTIPMKVPLPPKSSAASSSHTALSTSSDSRPNTARSGNPSSGGQKYRLLPYDRHKYGHRNVAVPYRSLRERKKKLLITDEDGKDKQELMNYKPSNDREVPPAFTKLQMVYGRFGVQDFDFKAFNKTRYSGLETDIDNVYTNAVLQMYRFVPEVYNFLVSCLKMENFSDNSLLTELGSLYDMMVRANGEICRSSNFQEALASIPKSYLLGLITDSIDNALEPNTTVSGTSISDSDASGSSMTAKLESMVLGDDKTTISCHDNNDNSLTTPQKFNTFLLNRLLFEELQMKINTTQSIVLEELLGIDVQVTTRSISPCANFTRRSDIIPVLTVTSPISNNIKYVNKKLNNQTILPYIESSMSRLKHTKAMCEKCFKCETVESEKTVRNLPPLLSLNISLTSDEWATAKTVRGWLTKEFYATISKDRPILKLQPTDLKTTNAIFKYELNGYVARICDYITEPHLVAYSKIFDPTTRTYKWYMFNDFLVQEVDEEEALNISYWWKTPEIAIYSDAEELTKPFVPASFYTINYSILYRDHFANGMRESIKKEYRLLTAEEAPKPGSLVALDAEFVALSEDQVEISCKGTKTLIKPAKTALARVSVLRGEGDLAGVPFIDDYIVNTKHIEDYLTKYSGIEPGDLDPDTSSKPLVTRRVVLRKIWLLLQLGCIFVGHGLYNDFRNINIHVPKEQTRDTALYYLQGRRYLSLRYLAYALLDKDIQKGNHDSIEDAYTALVLYRKYLDLREKGIFETVLNRIYEEGRASNYRVPGDLQ</sequence>
<accession>Q754X1</accession>
<proteinExistence type="inferred from homology"/>
<gene>
    <name evidence="1" type="primary">PAN2</name>
    <name type="ordered locus">AFL055W</name>
</gene>
<reference key="1">
    <citation type="journal article" date="2004" name="Science">
        <title>The Ashbya gossypii genome as a tool for mapping the ancient Saccharomyces cerevisiae genome.</title>
        <authorList>
            <person name="Dietrich F.S."/>
            <person name="Voegeli S."/>
            <person name="Brachat S."/>
            <person name="Lerch A."/>
            <person name="Gates K."/>
            <person name="Steiner S."/>
            <person name="Mohr C."/>
            <person name="Poehlmann R."/>
            <person name="Luedi P."/>
            <person name="Choi S."/>
            <person name="Wing R.A."/>
            <person name="Flavier A."/>
            <person name="Gaffney T.D."/>
            <person name="Philippsen P."/>
        </authorList>
    </citation>
    <scope>NUCLEOTIDE SEQUENCE [LARGE SCALE GENOMIC DNA]</scope>
    <source>
        <strain>ATCC 10895 / CBS 109.51 / FGSC 9923 / NRRL Y-1056</strain>
    </source>
</reference>
<reference key="2">
    <citation type="journal article" date="2013" name="G3 (Bethesda)">
        <title>Genomes of Ashbya fungi isolated from insects reveal four mating-type loci, numerous translocations, lack of transposons, and distinct gene duplications.</title>
        <authorList>
            <person name="Dietrich F.S."/>
            <person name="Voegeli S."/>
            <person name="Kuo S."/>
            <person name="Philippsen P."/>
        </authorList>
    </citation>
    <scope>GENOME REANNOTATION</scope>
    <scope>SEQUENCE REVISION TO 960-961</scope>
    <source>
        <strain>ATCC 10895 / CBS 109.51 / FGSC 9923 / NRRL Y-1056</strain>
    </source>
</reference>
<name>PAN2_EREGS</name>
<organism>
    <name type="scientific">Eremothecium gossypii (strain ATCC 10895 / CBS 109.51 / FGSC 9923 / NRRL Y-1056)</name>
    <name type="common">Yeast</name>
    <name type="synonym">Ashbya gossypii</name>
    <dbReference type="NCBI Taxonomy" id="284811"/>
    <lineage>
        <taxon>Eukaryota</taxon>
        <taxon>Fungi</taxon>
        <taxon>Dikarya</taxon>
        <taxon>Ascomycota</taxon>
        <taxon>Saccharomycotina</taxon>
        <taxon>Saccharomycetes</taxon>
        <taxon>Saccharomycetales</taxon>
        <taxon>Saccharomycetaceae</taxon>
        <taxon>Eremothecium</taxon>
    </lineage>
</organism>